<gene>
    <name type="primary">acy1</name>
    <name type="ORF">DDB_G0270562</name>
</gene>
<feature type="chain" id="PRO_0000331214" description="Aminoacylase-1">
    <location>
        <begin position="1"/>
        <end position="408"/>
    </location>
</feature>
<feature type="active site" evidence="1">
    <location>
        <position position="78"/>
    </location>
</feature>
<feature type="active site" description="Proton acceptor" evidence="1">
    <location>
        <position position="143"/>
    </location>
</feature>
<feature type="binding site" evidence="1">
    <location>
        <position position="76"/>
    </location>
    <ligand>
        <name>Zn(2+)</name>
        <dbReference type="ChEBI" id="CHEBI:29105"/>
        <label>1</label>
    </ligand>
</feature>
<feature type="binding site" evidence="1">
    <location>
        <position position="109"/>
    </location>
    <ligand>
        <name>Zn(2+)</name>
        <dbReference type="ChEBI" id="CHEBI:29105"/>
        <label>1</label>
    </ligand>
</feature>
<feature type="binding site" evidence="1">
    <location>
        <position position="109"/>
    </location>
    <ligand>
        <name>Zn(2+)</name>
        <dbReference type="ChEBI" id="CHEBI:29105"/>
        <label>2</label>
    </ligand>
</feature>
<feature type="binding site" evidence="1">
    <location>
        <position position="144"/>
    </location>
    <ligand>
        <name>Zn(2+)</name>
        <dbReference type="ChEBI" id="CHEBI:29105"/>
        <label>2</label>
    </ligand>
</feature>
<feature type="binding site" evidence="1">
    <location>
        <position position="172"/>
    </location>
    <ligand>
        <name>Zn(2+)</name>
        <dbReference type="ChEBI" id="CHEBI:29105"/>
        <label>1</label>
    </ligand>
</feature>
<feature type="binding site" evidence="1">
    <location>
        <position position="379"/>
    </location>
    <ligand>
        <name>Zn(2+)</name>
        <dbReference type="ChEBI" id="CHEBI:29105"/>
        <label>2</label>
    </ligand>
</feature>
<comment type="function">
    <text evidence="1">Involved in the hydrolysis of N-acylated or N-acetylated amino acids (except L-aspartate).</text>
</comment>
<comment type="catalytic activity">
    <reaction>
        <text>an N-acyl-L-amino acid + H2O = an L-alpha-amino acid + a carboxylate</text>
        <dbReference type="Rhea" id="RHEA:15565"/>
        <dbReference type="ChEBI" id="CHEBI:15377"/>
        <dbReference type="ChEBI" id="CHEBI:29067"/>
        <dbReference type="ChEBI" id="CHEBI:59869"/>
        <dbReference type="ChEBI" id="CHEBI:59874"/>
        <dbReference type="EC" id="3.5.1.14"/>
    </reaction>
</comment>
<comment type="catalytic activity">
    <reaction>
        <text>an N-acetyl-L-cysteine-S-conjugate + H2O = an S-substituted L-cysteine + acetate</text>
        <dbReference type="Rhea" id="RHEA:36855"/>
        <dbReference type="ChEBI" id="CHEBI:15377"/>
        <dbReference type="ChEBI" id="CHEBI:30089"/>
        <dbReference type="ChEBI" id="CHEBI:58717"/>
        <dbReference type="ChEBI" id="CHEBI:58718"/>
        <dbReference type="EC" id="3.5.1.14"/>
    </reaction>
</comment>
<comment type="cofactor">
    <cofactor evidence="1">
        <name>Zn(2+)</name>
        <dbReference type="ChEBI" id="CHEBI:29105"/>
    </cofactor>
    <text evidence="1">Binds 2 Zn(2+) ions per subunit.</text>
</comment>
<comment type="subunit">
    <text evidence="1">Homodimer.</text>
</comment>
<comment type="subcellular location">
    <subcellularLocation>
        <location evidence="1">Cytoplasm</location>
    </subcellularLocation>
</comment>
<comment type="similarity">
    <text evidence="2">Belongs to the peptidase M20A family.</text>
</comment>
<evidence type="ECO:0000250" key="1"/>
<evidence type="ECO:0000305" key="2"/>
<keyword id="KW-0963">Cytoplasm</keyword>
<keyword id="KW-0378">Hydrolase</keyword>
<keyword id="KW-0479">Metal-binding</keyword>
<keyword id="KW-1185">Reference proteome</keyword>
<keyword id="KW-0862">Zinc</keyword>
<protein>
    <recommendedName>
        <fullName>Aminoacylase-1</fullName>
        <shortName>ACY-1</shortName>
        <ecNumber>3.5.1.14</ecNumber>
    </recommendedName>
    <alternativeName>
        <fullName>N-acyl-L-amino-acid amidohydrolase</fullName>
    </alternativeName>
</protein>
<sequence>MNSIQENEHVTVFREFLKIRTDHPTPDYESSTKFLVEKAKEYNIPYEVYRETGTPIVLMKIEGLEPNLKTVLLNSHVDVVPAVHDSWKVDPFSAWKDESGNIFGRGTQDMKCVCMQFLEVARRIVQSGQKLKRTLHLSFVPDEEIGGSGKGMEKFVYTEKFRQLNIGLCLDEGLASPTNDFTVFYGERAPWWVHITAVGNAGHGSRFIEGTAIEKLMRTINKMLAFRQEQFESLHHGQHECGKKLGDVTSLNLTVLKAGIPIDHSNNFSYNVIPTQAEAGFDIRIPPTVNLDQFLDQIKEWTAEEGLSFKFASYIPKNEMTKLDSDNKWWENFKESCKKMDINLVTEIFPAATDSRFIRNLGIPAFGFSPINNTPILLHDHNEFLNEKVYLRGIDIFMGIIPNLVNME</sequence>
<accession>Q55DP8</accession>
<dbReference type="EC" id="3.5.1.14"/>
<dbReference type="EMBL" id="AAFI02000005">
    <property type="protein sequence ID" value="EAL72631.1"/>
    <property type="molecule type" value="Genomic_DNA"/>
</dbReference>
<dbReference type="RefSeq" id="XP_646083.1">
    <property type="nucleotide sequence ID" value="XM_640991.1"/>
</dbReference>
<dbReference type="SMR" id="Q55DP8"/>
<dbReference type="FunCoup" id="Q55DP8">
    <property type="interactions" value="62"/>
</dbReference>
<dbReference type="STRING" id="44689.Q55DP8"/>
<dbReference type="PaxDb" id="44689-DDB0266648"/>
<dbReference type="EnsemblProtists" id="EAL72631">
    <property type="protein sequence ID" value="EAL72631"/>
    <property type="gene ID" value="DDB_G0270562"/>
</dbReference>
<dbReference type="GeneID" id="8617033"/>
<dbReference type="KEGG" id="ddi:DDB_G0270562"/>
<dbReference type="dictyBase" id="DDB_G0270562">
    <property type="gene designation" value="acy1"/>
</dbReference>
<dbReference type="VEuPathDB" id="AmoebaDB:DDB_G0270562"/>
<dbReference type="eggNOG" id="KOG2275">
    <property type="taxonomic scope" value="Eukaryota"/>
</dbReference>
<dbReference type="HOGENOM" id="CLU_021802_5_0_1"/>
<dbReference type="InParanoid" id="Q55DP8"/>
<dbReference type="OMA" id="GTDAKQF"/>
<dbReference type="PhylomeDB" id="Q55DP8"/>
<dbReference type="Reactome" id="R-DDI-5423646">
    <property type="pathway name" value="Aflatoxin activation and detoxification"/>
</dbReference>
<dbReference type="Reactome" id="R-DDI-9753281">
    <property type="pathway name" value="Paracetamol ADME"/>
</dbReference>
<dbReference type="PRO" id="PR:Q55DP8"/>
<dbReference type="Proteomes" id="UP000002195">
    <property type="component" value="Chromosome 1"/>
</dbReference>
<dbReference type="GO" id="GO:0005737">
    <property type="term" value="C:cytoplasm"/>
    <property type="evidence" value="ECO:0007669"/>
    <property type="project" value="UniProtKB-SubCell"/>
</dbReference>
<dbReference type="GO" id="GO:0004046">
    <property type="term" value="F:aminoacylase activity"/>
    <property type="evidence" value="ECO:0000318"/>
    <property type="project" value="GO_Central"/>
</dbReference>
<dbReference type="GO" id="GO:0046872">
    <property type="term" value="F:metal ion binding"/>
    <property type="evidence" value="ECO:0007669"/>
    <property type="project" value="UniProtKB-KW"/>
</dbReference>
<dbReference type="GO" id="GO:0006520">
    <property type="term" value="P:amino acid metabolic process"/>
    <property type="evidence" value="ECO:0007669"/>
    <property type="project" value="InterPro"/>
</dbReference>
<dbReference type="CDD" id="cd05646">
    <property type="entry name" value="M20_AcylaseI_like"/>
    <property type="match status" value="1"/>
</dbReference>
<dbReference type="FunFam" id="3.40.630.10:FF:000177">
    <property type="entry name" value="Aminoacylase 1"/>
    <property type="match status" value="1"/>
</dbReference>
<dbReference type="FunFam" id="1.10.150.900:FF:000001">
    <property type="entry name" value="Aminoacylase-1, putative"/>
    <property type="match status" value="1"/>
</dbReference>
<dbReference type="FunFam" id="3.30.70.360:FF:000005">
    <property type="entry name" value="Putative Aminoacylase-1"/>
    <property type="match status" value="1"/>
</dbReference>
<dbReference type="Gene3D" id="1.10.150.900">
    <property type="match status" value="1"/>
</dbReference>
<dbReference type="Gene3D" id="3.30.70.360">
    <property type="match status" value="1"/>
</dbReference>
<dbReference type="Gene3D" id="3.40.630.10">
    <property type="entry name" value="Zn peptidases"/>
    <property type="match status" value="1"/>
</dbReference>
<dbReference type="InterPro" id="IPR052083">
    <property type="entry name" value="Aminoacylase-1_M20A"/>
</dbReference>
<dbReference type="InterPro" id="IPR001261">
    <property type="entry name" value="ArgE/DapE_CS"/>
</dbReference>
<dbReference type="InterPro" id="IPR036264">
    <property type="entry name" value="Bact_exopeptidase_dim_dom"/>
</dbReference>
<dbReference type="InterPro" id="IPR010159">
    <property type="entry name" value="N-acyl_aa_amidohydrolase"/>
</dbReference>
<dbReference type="InterPro" id="IPR002933">
    <property type="entry name" value="Peptidase_M20"/>
</dbReference>
<dbReference type="InterPro" id="IPR011650">
    <property type="entry name" value="Peptidase_M20_dimer"/>
</dbReference>
<dbReference type="NCBIfam" id="TIGR01880">
    <property type="entry name" value="Ac-peptdase-euk"/>
    <property type="match status" value="1"/>
</dbReference>
<dbReference type="PANTHER" id="PTHR45892">
    <property type="entry name" value="AMINOACYLASE-1"/>
    <property type="match status" value="1"/>
</dbReference>
<dbReference type="PANTHER" id="PTHR45892:SF1">
    <property type="entry name" value="AMINOACYLASE-1"/>
    <property type="match status" value="1"/>
</dbReference>
<dbReference type="Pfam" id="PF07687">
    <property type="entry name" value="M20_dimer"/>
    <property type="match status" value="1"/>
</dbReference>
<dbReference type="Pfam" id="PF01546">
    <property type="entry name" value="Peptidase_M20"/>
    <property type="match status" value="1"/>
</dbReference>
<dbReference type="PIRSF" id="PIRSF036696">
    <property type="entry name" value="ACY-1"/>
    <property type="match status" value="1"/>
</dbReference>
<dbReference type="SUPFAM" id="SSF55031">
    <property type="entry name" value="Bacterial exopeptidase dimerisation domain"/>
    <property type="match status" value="1"/>
</dbReference>
<dbReference type="SUPFAM" id="SSF53187">
    <property type="entry name" value="Zn-dependent exopeptidases"/>
    <property type="match status" value="1"/>
</dbReference>
<dbReference type="PROSITE" id="PS00758">
    <property type="entry name" value="ARGE_DAPE_CPG2_1"/>
    <property type="match status" value="1"/>
</dbReference>
<dbReference type="PROSITE" id="PS00759">
    <property type="entry name" value="ARGE_DAPE_CPG2_2"/>
    <property type="match status" value="1"/>
</dbReference>
<reference key="1">
    <citation type="journal article" date="2005" name="Nature">
        <title>The genome of the social amoeba Dictyostelium discoideum.</title>
        <authorList>
            <person name="Eichinger L."/>
            <person name="Pachebat J.A."/>
            <person name="Gloeckner G."/>
            <person name="Rajandream M.A."/>
            <person name="Sucgang R."/>
            <person name="Berriman M."/>
            <person name="Song J."/>
            <person name="Olsen R."/>
            <person name="Szafranski K."/>
            <person name="Xu Q."/>
            <person name="Tunggal B."/>
            <person name="Kummerfeld S."/>
            <person name="Madera M."/>
            <person name="Konfortov B.A."/>
            <person name="Rivero F."/>
            <person name="Bankier A.T."/>
            <person name="Lehmann R."/>
            <person name="Hamlin N."/>
            <person name="Davies R."/>
            <person name="Gaudet P."/>
            <person name="Fey P."/>
            <person name="Pilcher K."/>
            <person name="Chen G."/>
            <person name="Saunders D."/>
            <person name="Sodergren E.J."/>
            <person name="Davis P."/>
            <person name="Kerhornou A."/>
            <person name="Nie X."/>
            <person name="Hall N."/>
            <person name="Anjard C."/>
            <person name="Hemphill L."/>
            <person name="Bason N."/>
            <person name="Farbrother P."/>
            <person name="Desany B."/>
            <person name="Just E."/>
            <person name="Morio T."/>
            <person name="Rost R."/>
            <person name="Churcher C.M."/>
            <person name="Cooper J."/>
            <person name="Haydock S."/>
            <person name="van Driessche N."/>
            <person name="Cronin A."/>
            <person name="Goodhead I."/>
            <person name="Muzny D.M."/>
            <person name="Mourier T."/>
            <person name="Pain A."/>
            <person name="Lu M."/>
            <person name="Harper D."/>
            <person name="Lindsay R."/>
            <person name="Hauser H."/>
            <person name="James K.D."/>
            <person name="Quiles M."/>
            <person name="Madan Babu M."/>
            <person name="Saito T."/>
            <person name="Buchrieser C."/>
            <person name="Wardroper A."/>
            <person name="Felder M."/>
            <person name="Thangavelu M."/>
            <person name="Johnson D."/>
            <person name="Knights A."/>
            <person name="Loulseged H."/>
            <person name="Mungall K.L."/>
            <person name="Oliver K."/>
            <person name="Price C."/>
            <person name="Quail M.A."/>
            <person name="Urushihara H."/>
            <person name="Hernandez J."/>
            <person name="Rabbinowitsch E."/>
            <person name="Steffen D."/>
            <person name="Sanders M."/>
            <person name="Ma J."/>
            <person name="Kohara Y."/>
            <person name="Sharp S."/>
            <person name="Simmonds M.N."/>
            <person name="Spiegler S."/>
            <person name="Tivey A."/>
            <person name="Sugano S."/>
            <person name="White B."/>
            <person name="Walker D."/>
            <person name="Woodward J.R."/>
            <person name="Winckler T."/>
            <person name="Tanaka Y."/>
            <person name="Shaulsky G."/>
            <person name="Schleicher M."/>
            <person name="Weinstock G.M."/>
            <person name="Rosenthal A."/>
            <person name="Cox E.C."/>
            <person name="Chisholm R.L."/>
            <person name="Gibbs R.A."/>
            <person name="Loomis W.F."/>
            <person name="Platzer M."/>
            <person name="Kay R.R."/>
            <person name="Williams J.G."/>
            <person name="Dear P.H."/>
            <person name="Noegel A.A."/>
            <person name="Barrell B.G."/>
            <person name="Kuspa A."/>
        </authorList>
    </citation>
    <scope>NUCLEOTIDE SEQUENCE [LARGE SCALE GENOMIC DNA]</scope>
    <source>
        <strain>AX4</strain>
    </source>
</reference>
<organism>
    <name type="scientific">Dictyostelium discoideum</name>
    <name type="common">Social amoeba</name>
    <dbReference type="NCBI Taxonomy" id="44689"/>
    <lineage>
        <taxon>Eukaryota</taxon>
        <taxon>Amoebozoa</taxon>
        <taxon>Evosea</taxon>
        <taxon>Eumycetozoa</taxon>
        <taxon>Dictyostelia</taxon>
        <taxon>Dictyosteliales</taxon>
        <taxon>Dictyosteliaceae</taxon>
        <taxon>Dictyostelium</taxon>
    </lineage>
</organism>
<proteinExistence type="evidence at transcript level"/>
<name>ACY1_DICDI</name>